<keyword id="KW-0007">Acetylation</keyword>
<keyword id="KW-0963">Cytoplasm</keyword>
<keyword id="KW-0443">Lipid metabolism</keyword>
<keyword id="KW-0496">Mitochondrion</keyword>
<keyword id="KW-0560">Oxidoreductase</keyword>
<keyword id="KW-0575">Peroxidase</keyword>
<keyword id="KW-0597">Phosphoprotein</keyword>
<keyword id="KW-1185">Reference proteome</keyword>
<keyword id="KW-0712">Selenocysteine</keyword>
<dbReference type="EC" id="1.11.1.9" evidence="4"/>
<dbReference type="EC" id="1.11.1.12" evidence="4"/>
<dbReference type="EMBL" id="AB120996">
    <property type="protein sequence ID" value="BAF31850.1"/>
    <property type="molecule type" value="mRNA"/>
</dbReference>
<dbReference type="RefSeq" id="NP_001070980.2">
    <property type="nucleotide sequence ID" value="NM_001077512.2"/>
</dbReference>
<dbReference type="FunCoup" id="Q0EFA0">
    <property type="interactions" value="739"/>
</dbReference>
<dbReference type="STRING" id="9598.ENSPTRP00000051383"/>
<dbReference type="PeroxiBase" id="1358">
    <property type="entry name" value="PtroGPx01-A"/>
</dbReference>
<dbReference type="PaxDb" id="9598-ENSPTRP00000051383"/>
<dbReference type="GeneID" id="461015"/>
<dbReference type="KEGG" id="ptr:461015"/>
<dbReference type="CTD" id="2876"/>
<dbReference type="eggNOG" id="KOG1651">
    <property type="taxonomic scope" value="Eukaryota"/>
</dbReference>
<dbReference type="InParanoid" id="Q0EFA0"/>
<dbReference type="OrthoDB" id="3675at9604"/>
<dbReference type="Proteomes" id="UP000002277">
    <property type="component" value="Unplaced"/>
</dbReference>
<dbReference type="GO" id="GO:0005829">
    <property type="term" value="C:cytosol"/>
    <property type="evidence" value="ECO:0000250"/>
    <property type="project" value="UniProtKB"/>
</dbReference>
<dbReference type="GO" id="GO:0005739">
    <property type="term" value="C:mitochondrion"/>
    <property type="evidence" value="ECO:0000318"/>
    <property type="project" value="GO_Central"/>
</dbReference>
<dbReference type="GO" id="GO:0004602">
    <property type="term" value="F:glutathione peroxidase activity"/>
    <property type="evidence" value="ECO:0000250"/>
    <property type="project" value="UniProtKB"/>
</dbReference>
<dbReference type="GO" id="GO:0047066">
    <property type="term" value="F:phospholipid-hydroperoxide glutathione peroxidase activity"/>
    <property type="evidence" value="ECO:0000250"/>
    <property type="project" value="UniProtKB"/>
</dbReference>
<dbReference type="GO" id="GO:0019369">
    <property type="term" value="P:arachidonate metabolic process"/>
    <property type="evidence" value="ECO:0000250"/>
    <property type="project" value="UniProtKB"/>
</dbReference>
<dbReference type="GO" id="GO:0006749">
    <property type="term" value="P:glutathione metabolic process"/>
    <property type="evidence" value="ECO:0000318"/>
    <property type="project" value="GO_Central"/>
</dbReference>
<dbReference type="GO" id="GO:0042744">
    <property type="term" value="P:hydrogen peroxide catabolic process"/>
    <property type="evidence" value="ECO:0000318"/>
    <property type="project" value="GO_Central"/>
</dbReference>
<dbReference type="GO" id="GO:0019372">
    <property type="term" value="P:lipoxygenase pathway"/>
    <property type="evidence" value="ECO:0000250"/>
    <property type="project" value="UniProtKB"/>
</dbReference>
<dbReference type="GO" id="GO:0042542">
    <property type="term" value="P:response to hydrogen peroxide"/>
    <property type="evidence" value="ECO:0000318"/>
    <property type="project" value="GO_Central"/>
</dbReference>
<dbReference type="GO" id="GO:0010269">
    <property type="term" value="P:response to selenium ion"/>
    <property type="evidence" value="ECO:0000318"/>
    <property type="project" value="GO_Central"/>
</dbReference>
<dbReference type="CDD" id="cd00340">
    <property type="entry name" value="GSH_Peroxidase"/>
    <property type="match status" value="1"/>
</dbReference>
<dbReference type="FunFam" id="3.40.30.10:FF:000153">
    <property type="entry name" value="Glutathione peroxidase"/>
    <property type="match status" value="1"/>
</dbReference>
<dbReference type="Gene3D" id="3.40.30.10">
    <property type="entry name" value="Glutaredoxin"/>
    <property type="match status" value="1"/>
</dbReference>
<dbReference type="InterPro" id="IPR000889">
    <property type="entry name" value="Glutathione_peroxidase"/>
</dbReference>
<dbReference type="InterPro" id="IPR029759">
    <property type="entry name" value="GPX_AS"/>
</dbReference>
<dbReference type="InterPro" id="IPR029760">
    <property type="entry name" value="GPX_CS"/>
</dbReference>
<dbReference type="InterPro" id="IPR036249">
    <property type="entry name" value="Thioredoxin-like_sf"/>
</dbReference>
<dbReference type="PANTHER" id="PTHR11592">
    <property type="entry name" value="GLUTATHIONE PEROXIDASE"/>
    <property type="match status" value="1"/>
</dbReference>
<dbReference type="PANTHER" id="PTHR11592:SF41">
    <property type="entry name" value="GLUTATHIONE PEROXIDASE 1"/>
    <property type="match status" value="1"/>
</dbReference>
<dbReference type="Pfam" id="PF00255">
    <property type="entry name" value="GSHPx"/>
    <property type="match status" value="1"/>
</dbReference>
<dbReference type="PIRSF" id="PIRSF000303">
    <property type="entry name" value="Glutathion_perox"/>
    <property type="match status" value="1"/>
</dbReference>
<dbReference type="PRINTS" id="PR01011">
    <property type="entry name" value="GLUTPROXDASE"/>
</dbReference>
<dbReference type="SUPFAM" id="SSF52833">
    <property type="entry name" value="Thioredoxin-like"/>
    <property type="match status" value="1"/>
</dbReference>
<dbReference type="PROSITE" id="PS00460">
    <property type="entry name" value="GLUTATHIONE_PEROXID_1"/>
    <property type="match status" value="1"/>
</dbReference>
<dbReference type="PROSITE" id="PS00763">
    <property type="entry name" value="GLUTATHIONE_PEROXID_2"/>
    <property type="match status" value="1"/>
</dbReference>
<dbReference type="PROSITE" id="PS51355">
    <property type="entry name" value="GLUTATHIONE_PEROXID_3"/>
    <property type="match status" value="1"/>
</dbReference>
<comment type="function">
    <text evidence="5">Catalyzes the reduction of hydroperoxides in a glutathione-dependent manner thus regulating cellular redox homeostasis. Can reduce small soluble hydroperoxides such as H2O2, cumene hydroperoxide and tert-butyl hydroperoxide, as well as several fatty acid-derived hydroperoxides. In platelets catalyzes the reduction of 12-hydroperoxyeicosatetraenoic acid, the primary product of the arachidonate 12-lipoxygenase pathway.</text>
</comment>
<comment type="catalytic activity">
    <reaction evidence="5">
        <text>2 glutathione + H2O2 = glutathione disulfide + 2 H2O</text>
        <dbReference type="Rhea" id="RHEA:16833"/>
        <dbReference type="ChEBI" id="CHEBI:15377"/>
        <dbReference type="ChEBI" id="CHEBI:16240"/>
        <dbReference type="ChEBI" id="CHEBI:57925"/>
        <dbReference type="ChEBI" id="CHEBI:58297"/>
        <dbReference type="EC" id="1.11.1.9"/>
    </reaction>
    <physiologicalReaction direction="left-to-right" evidence="5">
        <dbReference type="Rhea" id="RHEA:16834"/>
    </physiologicalReaction>
</comment>
<comment type="catalytic activity">
    <reaction evidence="4">
        <text>a hydroperoxy polyunsaturated fatty acid + 2 glutathione = a hydroxy polyunsaturated fatty acid + glutathione disulfide + H2O</text>
        <dbReference type="Rhea" id="RHEA:19057"/>
        <dbReference type="ChEBI" id="CHEBI:15377"/>
        <dbReference type="ChEBI" id="CHEBI:57925"/>
        <dbReference type="ChEBI" id="CHEBI:58297"/>
        <dbReference type="ChEBI" id="CHEBI:131871"/>
        <dbReference type="ChEBI" id="CHEBI:134019"/>
        <dbReference type="EC" id="1.11.1.12"/>
    </reaction>
    <physiologicalReaction direction="left-to-right" evidence="4">
        <dbReference type="Rhea" id="RHEA:19058"/>
    </physiologicalReaction>
</comment>
<comment type="catalytic activity">
    <reaction evidence="4">
        <text>tert-butyl hydroperoxide + 2 glutathione = tert-butanol + glutathione disulfide + H2O</text>
        <dbReference type="Rhea" id="RHEA:69412"/>
        <dbReference type="ChEBI" id="CHEBI:15377"/>
        <dbReference type="ChEBI" id="CHEBI:45895"/>
        <dbReference type="ChEBI" id="CHEBI:57925"/>
        <dbReference type="ChEBI" id="CHEBI:58297"/>
        <dbReference type="ChEBI" id="CHEBI:64090"/>
    </reaction>
    <physiologicalReaction direction="left-to-right" evidence="4">
        <dbReference type="Rhea" id="RHEA:69413"/>
    </physiologicalReaction>
</comment>
<comment type="catalytic activity">
    <reaction evidence="4">
        <text>cumene hydroperoxide + 2 glutathione = 2-phenylpropan-2-ol + glutathione disulfide + H2O</text>
        <dbReference type="Rhea" id="RHEA:69651"/>
        <dbReference type="ChEBI" id="CHEBI:15377"/>
        <dbReference type="ChEBI" id="CHEBI:57925"/>
        <dbReference type="ChEBI" id="CHEBI:58297"/>
        <dbReference type="ChEBI" id="CHEBI:78673"/>
        <dbReference type="ChEBI" id="CHEBI:131607"/>
    </reaction>
    <physiologicalReaction direction="left-to-right" evidence="4">
        <dbReference type="Rhea" id="RHEA:69652"/>
    </physiologicalReaction>
</comment>
<comment type="catalytic activity">
    <reaction evidence="4">
        <text>(13S)-hydroperoxy-(9Z,11E)-octadecadienoate + 2 glutathione = (13S)-hydroxy-(9Z,11E)-octadecadienoate + glutathione disulfide + H2O</text>
        <dbReference type="Rhea" id="RHEA:48888"/>
        <dbReference type="ChEBI" id="CHEBI:15377"/>
        <dbReference type="ChEBI" id="CHEBI:57466"/>
        <dbReference type="ChEBI" id="CHEBI:57925"/>
        <dbReference type="ChEBI" id="CHEBI:58297"/>
        <dbReference type="ChEBI" id="CHEBI:90850"/>
    </reaction>
    <physiologicalReaction direction="left-to-right" evidence="4">
        <dbReference type="Rhea" id="RHEA:48889"/>
    </physiologicalReaction>
</comment>
<comment type="catalytic activity">
    <reaction evidence="4">
        <text>(9S)-hydroperoxy-(10E,12Z)-octadecadienoate + 2 glutathione = (9S)-hydroxy-(10E,12Z)-octadecadienoate + glutathione disulfide + H2O</text>
        <dbReference type="Rhea" id="RHEA:76687"/>
        <dbReference type="ChEBI" id="CHEBI:15377"/>
        <dbReference type="ChEBI" id="CHEBI:57925"/>
        <dbReference type="ChEBI" id="CHEBI:58297"/>
        <dbReference type="ChEBI" id="CHEBI:60955"/>
        <dbReference type="ChEBI" id="CHEBI:77852"/>
    </reaction>
    <physiologicalReaction direction="left-to-right" evidence="4">
        <dbReference type="Rhea" id="RHEA:76688"/>
    </physiologicalReaction>
</comment>
<comment type="catalytic activity">
    <reaction evidence="4">
        <text>(5S)-hydroperoxy-(6E,8Z,11Z,14Z)-eicosatetraenoate + 2 glutathione = (5S)-hydroxy-(6E,8Z,11Z,14Z)-eicosatetraenoate + glutathione disulfide + H2O</text>
        <dbReference type="Rhea" id="RHEA:48620"/>
        <dbReference type="ChEBI" id="CHEBI:15377"/>
        <dbReference type="ChEBI" id="CHEBI:57450"/>
        <dbReference type="ChEBI" id="CHEBI:57925"/>
        <dbReference type="ChEBI" id="CHEBI:58297"/>
        <dbReference type="ChEBI" id="CHEBI:90632"/>
    </reaction>
    <physiologicalReaction direction="left-to-right" evidence="4">
        <dbReference type="Rhea" id="RHEA:48621"/>
    </physiologicalReaction>
</comment>
<comment type="catalytic activity">
    <reaction evidence="5">
        <text>(12S)-hydroperoxy-(5Z,8Z,10E,14Z)-eicosatetraenoate + 2 glutathione = (12S)-hydroxy-(5Z,8Z,10E,14Z)-eicosatetraenoate + glutathione disulfide + H2O</text>
        <dbReference type="Rhea" id="RHEA:50708"/>
        <dbReference type="ChEBI" id="CHEBI:15377"/>
        <dbReference type="ChEBI" id="CHEBI:57444"/>
        <dbReference type="ChEBI" id="CHEBI:57925"/>
        <dbReference type="ChEBI" id="CHEBI:58297"/>
        <dbReference type="ChEBI" id="CHEBI:90680"/>
    </reaction>
    <physiologicalReaction direction="left-to-right" evidence="5">
        <dbReference type="Rhea" id="RHEA:50709"/>
    </physiologicalReaction>
</comment>
<comment type="catalytic activity">
    <reaction evidence="4">
        <text>(12R)-hydroperoxy-(5Z,8Z,10E,14Z)-eicosatetraenoate + 2 glutathione = (12R)-hydroxy-(5Z,8Z,10E,14Z)-eicosatetraenoate + glutathione disulfide + H2O</text>
        <dbReference type="Rhea" id="RHEA:76691"/>
        <dbReference type="ChEBI" id="CHEBI:15377"/>
        <dbReference type="ChEBI" id="CHEBI:57925"/>
        <dbReference type="ChEBI" id="CHEBI:58297"/>
        <dbReference type="ChEBI" id="CHEBI:75230"/>
        <dbReference type="ChEBI" id="CHEBI:83343"/>
    </reaction>
    <physiologicalReaction direction="left-to-right" evidence="4">
        <dbReference type="Rhea" id="RHEA:76692"/>
    </physiologicalReaction>
</comment>
<comment type="catalytic activity">
    <reaction evidence="4">
        <text>(15S)-hydroperoxy-(5Z,8Z,11Z,13E)-eicosatetraenoate + 2 glutathione = (15S)-hydroxy-(5Z,8Z,11Z,13E)-eicosatetraenoate + glutathione disulfide + H2O</text>
        <dbReference type="Rhea" id="RHEA:76695"/>
        <dbReference type="ChEBI" id="CHEBI:15377"/>
        <dbReference type="ChEBI" id="CHEBI:57409"/>
        <dbReference type="ChEBI" id="CHEBI:57446"/>
        <dbReference type="ChEBI" id="CHEBI:57925"/>
        <dbReference type="ChEBI" id="CHEBI:58297"/>
    </reaction>
    <physiologicalReaction direction="left-to-right" evidence="4">
        <dbReference type="Rhea" id="RHEA:76696"/>
    </physiologicalReaction>
</comment>
<comment type="catalytic activity">
    <reaction evidence="4">
        <text>(5S)-hydroperoxy-(6E,8Z,11Z,14Z,17Z)-eicosapentaenoate + 2 glutathione = (5S)-hydroxy-(6E,8Z,11Z,14Z,17Z)-eicosapentaenoate + glutathione disulfide + H2O</text>
        <dbReference type="Rhea" id="RHEA:76699"/>
        <dbReference type="ChEBI" id="CHEBI:15377"/>
        <dbReference type="ChEBI" id="CHEBI:57925"/>
        <dbReference type="ChEBI" id="CHEBI:58297"/>
        <dbReference type="ChEBI" id="CHEBI:195399"/>
        <dbReference type="ChEBI" id="CHEBI:195400"/>
    </reaction>
    <physiologicalReaction direction="left-to-right" evidence="4">
        <dbReference type="Rhea" id="RHEA:76700"/>
    </physiologicalReaction>
</comment>
<comment type="catalytic activity">
    <reaction evidence="4">
        <text>(12S)-hydroperoxy-(5Z,8Z,10E,14Z,17Z)-eicosapentaenoate + 2 glutathione = (12S)-hydroxy-(5Z,8Z,10E,14Z,17Z)-eicosapentaenoate + glutathione disulfide + H2O</text>
        <dbReference type="Rhea" id="RHEA:76703"/>
        <dbReference type="ChEBI" id="CHEBI:15377"/>
        <dbReference type="ChEBI" id="CHEBI:57925"/>
        <dbReference type="ChEBI" id="CHEBI:58297"/>
        <dbReference type="ChEBI" id="CHEBI:90772"/>
        <dbReference type="ChEBI" id="CHEBI:195401"/>
    </reaction>
    <physiologicalReaction direction="left-to-right" evidence="4">
        <dbReference type="Rhea" id="RHEA:76704"/>
    </physiologicalReaction>
</comment>
<comment type="catalytic activity">
    <reaction evidence="4">
        <text>(15S)-hydroperoxy-(5Z,8Z,11Z,13E,17Z)-eicosapentaenoate + 2 glutathione = (15S)-hydroxy-(5Z,8Z,11Z,13E,17Z)-eicosapentaenoate + glutathione disulfide + H2O</text>
        <dbReference type="Rhea" id="RHEA:76707"/>
        <dbReference type="ChEBI" id="CHEBI:15377"/>
        <dbReference type="ChEBI" id="CHEBI:57925"/>
        <dbReference type="ChEBI" id="CHEBI:58297"/>
        <dbReference type="ChEBI" id="CHEBI:132087"/>
        <dbReference type="ChEBI" id="CHEBI:194369"/>
    </reaction>
    <physiologicalReaction direction="left-to-right" evidence="4">
        <dbReference type="Rhea" id="RHEA:76708"/>
    </physiologicalReaction>
</comment>
<comment type="catalytic activity">
    <reaction evidence="4">
        <text>(15S)-hydroperoxy-(11Z,13E)-eicosadienoate + 2 glutathione = (15S)-hydroxy-(11Z,13E)-eicosadienoate + glutathione disulfide + H2O</text>
        <dbReference type="Rhea" id="RHEA:76711"/>
        <dbReference type="ChEBI" id="CHEBI:15377"/>
        <dbReference type="ChEBI" id="CHEBI:57925"/>
        <dbReference type="ChEBI" id="CHEBI:58297"/>
        <dbReference type="ChEBI" id="CHEBI:144832"/>
        <dbReference type="ChEBI" id="CHEBI:195402"/>
    </reaction>
    <physiologicalReaction direction="left-to-right" evidence="4">
        <dbReference type="Rhea" id="RHEA:76712"/>
    </physiologicalReaction>
</comment>
<comment type="catalytic activity">
    <reaction evidence="4">
        <text>(17S)-hydroperoxy-(4Z,7Z,10Z,13Z,15E,19Z)-docosahexaenoate + 2 glutathione = (17S)-hydroxy-(4Z,7Z,10Z,13Z,15E,19Z)-docosahexaenoate + glutathione disulfide + H2O</text>
        <dbReference type="Rhea" id="RHEA:76715"/>
        <dbReference type="ChEBI" id="CHEBI:15377"/>
        <dbReference type="ChEBI" id="CHEBI:57925"/>
        <dbReference type="ChEBI" id="CHEBI:58297"/>
        <dbReference type="ChEBI" id="CHEBI:133795"/>
        <dbReference type="ChEBI" id="CHEBI:195403"/>
    </reaction>
    <physiologicalReaction direction="left-to-right" evidence="4">
        <dbReference type="Rhea" id="RHEA:76716"/>
    </physiologicalReaction>
</comment>
<comment type="subunit">
    <text evidence="5">Homotetramer. Interacts with MIEN1 (By similarity).</text>
</comment>
<comment type="subcellular location">
    <subcellularLocation>
        <location evidence="5">Cytoplasm</location>
    </subcellularLocation>
    <subcellularLocation>
        <location evidence="5">Mitochondrion</location>
    </subcellularLocation>
</comment>
<comment type="PTM">
    <text evidence="5">During periods of oxidative stress, Sec-47 may react with a superoxide radical, irreversibly lose hydroselenide and be converted to dehydroalanine.</text>
</comment>
<comment type="similarity">
    <text evidence="6">Belongs to the glutathione peroxidase family.</text>
</comment>
<organism>
    <name type="scientific">Pan troglodytes</name>
    <name type="common">Chimpanzee</name>
    <dbReference type="NCBI Taxonomy" id="9598"/>
    <lineage>
        <taxon>Eukaryota</taxon>
        <taxon>Metazoa</taxon>
        <taxon>Chordata</taxon>
        <taxon>Craniata</taxon>
        <taxon>Vertebrata</taxon>
        <taxon>Euteleostomi</taxon>
        <taxon>Mammalia</taxon>
        <taxon>Eutheria</taxon>
        <taxon>Euarchontoglires</taxon>
        <taxon>Primates</taxon>
        <taxon>Haplorrhini</taxon>
        <taxon>Catarrhini</taxon>
        <taxon>Hominidae</taxon>
        <taxon>Pan</taxon>
    </lineage>
</organism>
<proteinExistence type="evidence at transcript level"/>
<evidence type="ECO:0000250" key="1"/>
<evidence type="ECO:0000250" key="2">
    <source>
        <dbReference type="UniProtKB" id="O70325"/>
    </source>
</evidence>
<evidence type="ECO:0000250" key="3">
    <source>
        <dbReference type="UniProtKB" id="P04041"/>
    </source>
</evidence>
<evidence type="ECO:0000250" key="4">
    <source>
        <dbReference type="UniProtKB" id="P07203"/>
    </source>
</evidence>
<evidence type="ECO:0000250" key="5">
    <source>
        <dbReference type="UniProtKB" id="P11352"/>
    </source>
</evidence>
<evidence type="ECO:0000305" key="6"/>
<name>GPX1_PANTR</name>
<reference key="1">
    <citation type="submission" date="2003-09" db="EMBL/GenBank/DDBJ databases">
        <title>Molecular evolution of primate glutathione peroxidases.</title>
        <authorList>
            <person name="Fukuhara R."/>
            <person name="Kageyama T."/>
        </authorList>
    </citation>
    <scope>NUCLEOTIDE SEQUENCE [MRNA]</scope>
</reference>
<feature type="chain" id="PRO_0000274127" description="Glutathione peroxidase 1">
    <location>
        <begin position="1"/>
        <end position="201"/>
    </location>
</feature>
<feature type="active site" evidence="2">
    <location>
        <position position="47"/>
    </location>
</feature>
<feature type="site" description="Subject to oxidation and hydroselenide loss to dehydroalanine" evidence="1">
    <location>
        <position position="47"/>
    </location>
</feature>
<feature type="non-standard amino acid" description="Selenocysteine" evidence="5">
    <location>
        <position position="47"/>
    </location>
</feature>
<feature type="modified residue" description="Phosphoserine" evidence="3">
    <location>
        <position position="32"/>
    </location>
</feature>
<feature type="modified residue" description="N6-acetyllysine; alternate" evidence="5">
    <location>
        <position position="86"/>
    </location>
</feature>
<feature type="modified residue" description="N6-succinyllysine; alternate" evidence="5">
    <location>
        <position position="86"/>
    </location>
</feature>
<feature type="modified residue" description="N6-acetyllysine; alternate" evidence="5">
    <location>
        <position position="112"/>
    </location>
</feature>
<feature type="modified residue" description="N6-succinyllysine; alternate" evidence="5">
    <location>
        <position position="112"/>
    </location>
</feature>
<feature type="modified residue" description="N6-acetyllysine; alternate" evidence="5">
    <location>
        <position position="146"/>
    </location>
</feature>
<feature type="modified residue" description="N6-succinyllysine; alternate" evidence="5">
    <location>
        <position position="146"/>
    </location>
</feature>
<feature type="modified residue" description="Phosphoserine" evidence="3">
    <location>
        <position position="195"/>
    </location>
</feature>
<feature type="modified residue" description="Phosphoserine" evidence="4">
    <location>
        <position position="199"/>
    </location>
</feature>
<sequence length="201" mass="21950">MCAARLAAAAAQSVYAFSARPLAGGEPVSLGSLRGKVLLIENVASLUGTTVRDYTQMNELQRRLGPRGLVVLGFPCNQFGHQENAKNEEILNSLKYVRPGGGFEPNFMLFEKCEVNGAGAHTLFAFLREALPAPSDDATALMTDPKLITWSPVCRNDVAWNFEKFLVGPDGVPLRRYSRRFQTIDIEPDIEALLSQGPSCA</sequence>
<protein>
    <recommendedName>
        <fullName evidence="6">Glutathione peroxidase 1</fullName>
        <shortName>GPx-1</shortName>
        <shortName>GSHPx-1</shortName>
        <ecNumber evidence="4">1.11.1.9</ecNumber>
    </recommendedName>
    <alternativeName>
        <fullName>Cellular glutathione peroxidase</fullName>
    </alternativeName>
    <alternativeName>
        <fullName>Phospholipid-hydroperoxide glutathione peroxidase GPX1</fullName>
        <ecNumber evidence="4">1.11.1.12</ecNumber>
    </alternativeName>
</protein>
<gene>
    <name type="primary">GPX1</name>
</gene>
<accession>Q0EFA0</accession>